<keyword id="KW-0004">4Fe-4S</keyword>
<keyword id="KW-0342">GTP-binding</keyword>
<keyword id="KW-0408">Iron</keyword>
<keyword id="KW-0411">Iron-sulfur</keyword>
<keyword id="KW-0456">Lyase</keyword>
<keyword id="KW-0479">Metal-binding</keyword>
<keyword id="KW-0501">Molybdenum cofactor biosynthesis</keyword>
<keyword id="KW-0547">Nucleotide-binding</keyword>
<keyword id="KW-0949">S-adenosyl-L-methionine</keyword>
<gene>
    <name evidence="1" type="primary">moaA</name>
    <name type="ordered locus">BAMEG_1006</name>
</gene>
<dbReference type="EC" id="4.1.99.22" evidence="1"/>
<dbReference type="EMBL" id="CP001215">
    <property type="protein sequence ID" value="ACP16122.1"/>
    <property type="molecule type" value="Genomic_DNA"/>
</dbReference>
<dbReference type="RefSeq" id="WP_000844151.1">
    <property type="nucleotide sequence ID" value="NC_012581.1"/>
</dbReference>
<dbReference type="SMR" id="C3LA56"/>
<dbReference type="GeneID" id="45023355"/>
<dbReference type="KEGG" id="bah:BAMEG_1006"/>
<dbReference type="HOGENOM" id="CLU_009273_0_1_9"/>
<dbReference type="UniPathway" id="UPA00344"/>
<dbReference type="GO" id="GO:0051539">
    <property type="term" value="F:4 iron, 4 sulfur cluster binding"/>
    <property type="evidence" value="ECO:0007669"/>
    <property type="project" value="UniProtKB-UniRule"/>
</dbReference>
<dbReference type="GO" id="GO:0061799">
    <property type="term" value="F:cyclic pyranopterin monophosphate synthase activity"/>
    <property type="evidence" value="ECO:0007669"/>
    <property type="project" value="TreeGrafter"/>
</dbReference>
<dbReference type="GO" id="GO:0061798">
    <property type="term" value="F:GTP 3',8'-cyclase activity"/>
    <property type="evidence" value="ECO:0007669"/>
    <property type="project" value="UniProtKB-UniRule"/>
</dbReference>
<dbReference type="GO" id="GO:0005525">
    <property type="term" value="F:GTP binding"/>
    <property type="evidence" value="ECO:0007669"/>
    <property type="project" value="UniProtKB-UniRule"/>
</dbReference>
<dbReference type="GO" id="GO:0046872">
    <property type="term" value="F:metal ion binding"/>
    <property type="evidence" value="ECO:0007669"/>
    <property type="project" value="UniProtKB-KW"/>
</dbReference>
<dbReference type="GO" id="GO:1904047">
    <property type="term" value="F:S-adenosyl-L-methionine binding"/>
    <property type="evidence" value="ECO:0007669"/>
    <property type="project" value="UniProtKB-UniRule"/>
</dbReference>
<dbReference type="GO" id="GO:0006777">
    <property type="term" value="P:Mo-molybdopterin cofactor biosynthetic process"/>
    <property type="evidence" value="ECO:0007669"/>
    <property type="project" value="UniProtKB-UniRule"/>
</dbReference>
<dbReference type="CDD" id="cd01335">
    <property type="entry name" value="Radical_SAM"/>
    <property type="match status" value="1"/>
</dbReference>
<dbReference type="CDD" id="cd21117">
    <property type="entry name" value="Twitch_MoaA"/>
    <property type="match status" value="1"/>
</dbReference>
<dbReference type="Gene3D" id="3.20.20.70">
    <property type="entry name" value="Aldolase class I"/>
    <property type="match status" value="1"/>
</dbReference>
<dbReference type="HAMAP" id="MF_01225_B">
    <property type="entry name" value="MoaA_B"/>
    <property type="match status" value="1"/>
</dbReference>
<dbReference type="InterPro" id="IPR013785">
    <property type="entry name" value="Aldolase_TIM"/>
</dbReference>
<dbReference type="InterPro" id="IPR006638">
    <property type="entry name" value="Elp3/MiaA/NifB-like_rSAM"/>
</dbReference>
<dbReference type="InterPro" id="IPR013483">
    <property type="entry name" value="MoaA"/>
</dbReference>
<dbReference type="InterPro" id="IPR000385">
    <property type="entry name" value="MoaA_NifB_PqqE_Fe-S-bd_CS"/>
</dbReference>
<dbReference type="InterPro" id="IPR010505">
    <property type="entry name" value="MoaA_twitch"/>
</dbReference>
<dbReference type="InterPro" id="IPR050105">
    <property type="entry name" value="MoCo_biosynth_MoaA/MoaC"/>
</dbReference>
<dbReference type="InterPro" id="IPR007197">
    <property type="entry name" value="rSAM"/>
</dbReference>
<dbReference type="NCBIfam" id="TIGR02666">
    <property type="entry name" value="moaA"/>
    <property type="match status" value="1"/>
</dbReference>
<dbReference type="PANTHER" id="PTHR22960:SF0">
    <property type="entry name" value="MOLYBDENUM COFACTOR BIOSYNTHESIS PROTEIN 1"/>
    <property type="match status" value="1"/>
</dbReference>
<dbReference type="PANTHER" id="PTHR22960">
    <property type="entry name" value="MOLYBDOPTERIN COFACTOR SYNTHESIS PROTEIN A"/>
    <property type="match status" value="1"/>
</dbReference>
<dbReference type="Pfam" id="PF13353">
    <property type="entry name" value="Fer4_12"/>
    <property type="match status" value="1"/>
</dbReference>
<dbReference type="Pfam" id="PF06463">
    <property type="entry name" value="Mob_synth_C"/>
    <property type="match status" value="1"/>
</dbReference>
<dbReference type="Pfam" id="PF04055">
    <property type="entry name" value="Radical_SAM"/>
    <property type="match status" value="1"/>
</dbReference>
<dbReference type="SFLD" id="SFLDG01383">
    <property type="entry name" value="cyclic_pyranopterin_phosphate"/>
    <property type="match status" value="1"/>
</dbReference>
<dbReference type="SFLD" id="SFLDG01072">
    <property type="entry name" value="dehydrogenase_like"/>
    <property type="match status" value="1"/>
</dbReference>
<dbReference type="SMART" id="SM00729">
    <property type="entry name" value="Elp3"/>
    <property type="match status" value="1"/>
</dbReference>
<dbReference type="SUPFAM" id="SSF102114">
    <property type="entry name" value="Radical SAM enzymes"/>
    <property type="match status" value="1"/>
</dbReference>
<dbReference type="PROSITE" id="PS01305">
    <property type="entry name" value="MOAA_NIFB_PQQE"/>
    <property type="match status" value="1"/>
</dbReference>
<dbReference type="PROSITE" id="PS51918">
    <property type="entry name" value="RADICAL_SAM"/>
    <property type="match status" value="1"/>
</dbReference>
<organism>
    <name type="scientific">Bacillus anthracis (strain CDC 684 / NRRL 3495)</name>
    <dbReference type="NCBI Taxonomy" id="568206"/>
    <lineage>
        <taxon>Bacteria</taxon>
        <taxon>Bacillati</taxon>
        <taxon>Bacillota</taxon>
        <taxon>Bacilli</taxon>
        <taxon>Bacillales</taxon>
        <taxon>Bacillaceae</taxon>
        <taxon>Bacillus</taxon>
        <taxon>Bacillus cereus group</taxon>
    </lineage>
</organism>
<accession>C3LA56</accession>
<sequence>MKSVTLDKLQRPLKDLRISVTDRCNFRCRYCMPEEIFGPDYSFLSNDKILSFDEIERITRIFVSLGVRKLRITGGEPLLRRGLPQLIERLNKVDGVEDIGLTTNGSLLKKFAPDLYKAGLSRVTVSLDSLEEERFFYLNGNRSKVQRVLEGIQAAAEVGMKIKINMVVQKGKNEQDILQMAQYFKENKHILRFIEYMDVGNYNGWELKEVVSKQEIVDMIHQVMPLERIEANYAGEVATRYSYIGSDEEIGVISSVTDSFCSSCTRARISAEGKLYTCLFASKGNDLRELLRSDYTDEEITDVVRDIWNNREDRYSDERLSNSNKKAMPKIEMSHIGG</sequence>
<proteinExistence type="inferred from homology"/>
<feature type="chain" id="PRO_1000164907" description="GTP 3',8-cyclase">
    <location>
        <begin position="1"/>
        <end position="338"/>
    </location>
</feature>
<feature type="domain" description="Radical SAM core" evidence="2">
    <location>
        <begin position="8"/>
        <end position="227"/>
    </location>
</feature>
<feature type="binding site" evidence="1">
    <location>
        <position position="17"/>
    </location>
    <ligand>
        <name>GTP</name>
        <dbReference type="ChEBI" id="CHEBI:37565"/>
    </ligand>
</feature>
<feature type="binding site" evidence="1">
    <location>
        <position position="24"/>
    </location>
    <ligand>
        <name>[4Fe-4S] cluster</name>
        <dbReference type="ChEBI" id="CHEBI:49883"/>
        <label>1</label>
        <note>4Fe-4S-S-AdoMet</note>
    </ligand>
</feature>
<feature type="binding site" evidence="1">
    <location>
        <position position="28"/>
    </location>
    <ligand>
        <name>[4Fe-4S] cluster</name>
        <dbReference type="ChEBI" id="CHEBI:49883"/>
        <label>1</label>
        <note>4Fe-4S-S-AdoMet</note>
    </ligand>
</feature>
<feature type="binding site" evidence="1">
    <location>
        <position position="30"/>
    </location>
    <ligand>
        <name>S-adenosyl-L-methionine</name>
        <dbReference type="ChEBI" id="CHEBI:59789"/>
    </ligand>
</feature>
<feature type="binding site" evidence="1">
    <location>
        <position position="31"/>
    </location>
    <ligand>
        <name>[4Fe-4S] cluster</name>
        <dbReference type="ChEBI" id="CHEBI:49883"/>
        <label>1</label>
        <note>4Fe-4S-S-AdoMet</note>
    </ligand>
</feature>
<feature type="binding site" evidence="1">
    <location>
        <position position="71"/>
    </location>
    <ligand>
        <name>GTP</name>
        <dbReference type="ChEBI" id="CHEBI:37565"/>
    </ligand>
</feature>
<feature type="binding site" evidence="1">
    <location>
        <position position="75"/>
    </location>
    <ligand>
        <name>S-adenosyl-L-methionine</name>
        <dbReference type="ChEBI" id="CHEBI:59789"/>
    </ligand>
</feature>
<feature type="binding site" evidence="1">
    <location>
        <position position="102"/>
    </location>
    <ligand>
        <name>GTP</name>
        <dbReference type="ChEBI" id="CHEBI:37565"/>
    </ligand>
</feature>
<feature type="binding site" evidence="1">
    <location>
        <position position="126"/>
    </location>
    <ligand>
        <name>S-adenosyl-L-methionine</name>
        <dbReference type="ChEBI" id="CHEBI:59789"/>
    </ligand>
</feature>
<feature type="binding site" evidence="1">
    <location>
        <position position="163"/>
    </location>
    <ligand>
        <name>GTP</name>
        <dbReference type="ChEBI" id="CHEBI:37565"/>
    </ligand>
</feature>
<feature type="binding site" evidence="1">
    <location>
        <position position="197"/>
    </location>
    <ligand>
        <name>S-adenosyl-L-methionine</name>
        <dbReference type="ChEBI" id="CHEBI:59789"/>
    </ligand>
</feature>
<feature type="binding site" evidence="1">
    <location>
        <position position="261"/>
    </location>
    <ligand>
        <name>[4Fe-4S] cluster</name>
        <dbReference type="ChEBI" id="CHEBI:49883"/>
        <label>2</label>
        <note>4Fe-4S-substrate</note>
    </ligand>
</feature>
<feature type="binding site" evidence="1">
    <location>
        <position position="264"/>
    </location>
    <ligand>
        <name>[4Fe-4S] cluster</name>
        <dbReference type="ChEBI" id="CHEBI:49883"/>
        <label>2</label>
        <note>4Fe-4S-substrate</note>
    </ligand>
</feature>
<feature type="binding site" evidence="1">
    <location>
        <begin position="266"/>
        <end position="268"/>
    </location>
    <ligand>
        <name>GTP</name>
        <dbReference type="ChEBI" id="CHEBI:37565"/>
    </ligand>
</feature>
<feature type="binding site" evidence="1">
    <location>
        <position position="278"/>
    </location>
    <ligand>
        <name>[4Fe-4S] cluster</name>
        <dbReference type="ChEBI" id="CHEBI:49883"/>
        <label>2</label>
        <note>4Fe-4S-substrate</note>
    </ligand>
</feature>
<evidence type="ECO:0000255" key="1">
    <source>
        <dbReference type="HAMAP-Rule" id="MF_01225"/>
    </source>
</evidence>
<evidence type="ECO:0000255" key="2">
    <source>
        <dbReference type="PROSITE-ProRule" id="PRU01266"/>
    </source>
</evidence>
<name>MOAA_BACAC</name>
<reference key="1">
    <citation type="submission" date="2008-10" db="EMBL/GenBank/DDBJ databases">
        <title>Genome sequence of Bacillus anthracis str. CDC 684.</title>
        <authorList>
            <person name="Dodson R.J."/>
            <person name="Munk A.C."/>
            <person name="Brettin T."/>
            <person name="Bruce D."/>
            <person name="Detter C."/>
            <person name="Tapia R."/>
            <person name="Han C."/>
            <person name="Sutton G."/>
            <person name="Sims D."/>
        </authorList>
    </citation>
    <scope>NUCLEOTIDE SEQUENCE [LARGE SCALE GENOMIC DNA]</scope>
    <source>
        <strain>CDC 684 / NRRL 3495</strain>
    </source>
</reference>
<comment type="function">
    <text evidence="1">Catalyzes the cyclization of GTP to (8S)-3',8-cyclo-7,8-dihydroguanosine 5'-triphosphate.</text>
</comment>
<comment type="catalytic activity">
    <reaction evidence="1">
        <text>GTP + AH2 + S-adenosyl-L-methionine = (8S)-3',8-cyclo-7,8-dihydroguanosine 5'-triphosphate + 5'-deoxyadenosine + L-methionine + A + H(+)</text>
        <dbReference type="Rhea" id="RHEA:49576"/>
        <dbReference type="ChEBI" id="CHEBI:13193"/>
        <dbReference type="ChEBI" id="CHEBI:15378"/>
        <dbReference type="ChEBI" id="CHEBI:17319"/>
        <dbReference type="ChEBI" id="CHEBI:17499"/>
        <dbReference type="ChEBI" id="CHEBI:37565"/>
        <dbReference type="ChEBI" id="CHEBI:57844"/>
        <dbReference type="ChEBI" id="CHEBI:59789"/>
        <dbReference type="ChEBI" id="CHEBI:131766"/>
        <dbReference type="EC" id="4.1.99.22"/>
    </reaction>
</comment>
<comment type="cofactor">
    <cofactor evidence="1">
        <name>[4Fe-4S] cluster</name>
        <dbReference type="ChEBI" id="CHEBI:49883"/>
    </cofactor>
    <text evidence="1">Binds 2 [4Fe-4S] clusters. Binds 1 [4Fe-4S] cluster coordinated with 3 cysteines and an exchangeable S-adenosyl-L-methionine and 1 [4Fe-4S] cluster coordinated with 3 cysteines and the GTP-derived substrate.</text>
</comment>
<comment type="pathway">
    <text evidence="1">Cofactor biosynthesis; molybdopterin biosynthesis.</text>
</comment>
<comment type="subunit">
    <text evidence="1">Monomer and homodimer.</text>
</comment>
<comment type="similarity">
    <text evidence="1">Belongs to the radical SAM superfamily. MoaA family.</text>
</comment>
<protein>
    <recommendedName>
        <fullName evidence="1">GTP 3',8-cyclase</fullName>
        <ecNumber evidence="1">4.1.99.22</ecNumber>
    </recommendedName>
    <alternativeName>
        <fullName evidence="1">Molybdenum cofactor biosynthesis protein A</fullName>
    </alternativeName>
</protein>